<evidence type="ECO:0000255" key="1">
    <source>
        <dbReference type="HAMAP-Rule" id="MF_00644"/>
    </source>
</evidence>
<reference key="1">
    <citation type="submission" date="2005-08" db="EMBL/GenBank/DDBJ databases">
        <title>Complete sequence of chromosome 1 of Synechococcus elongatus PCC 7942.</title>
        <authorList>
            <consortium name="US DOE Joint Genome Institute"/>
            <person name="Copeland A."/>
            <person name="Lucas S."/>
            <person name="Lapidus A."/>
            <person name="Barry K."/>
            <person name="Detter J.C."/>
            <person name="Glavina T."/>
            <person name="Hammon N."/>
            <person name="Israni S."/>
            <person name="Pitluck S."/>
            <person name="Schmutz J."/>
            <person name="Larimer F."/>
            <person name="Land M."/>
            <person name="Kyrpides N."/>
            <person name="Lykidis A."/>
            <person name="Golden S."/>
            <person name="Richardson P."/>
        </authorList>
    </citation>
    <scope>NUCLEOTIDE SEQUENCE [LARGE SCALE GENOMIC DNA]</scope>
    <source>
        <strain>ATCC 33912 / PCC 7942 / FACHB-805</strain>
    </source>
</reference>
<feature type="chain" id="PRO_1000056944" description="Photosystem II reaction center protein Z">
    <location>
        <begin position="1"/>
        <end position="62"/>
    </location>
</feature>
<feature type="transmembrane region" description="Helical" evidence="1">
    <location>
        <begin position="8"/>
        <end position="28"/>
    </location>
</feature>
<feature type="transmembrane region" description="Helical" evidence="1">
    <location>
        <begin position="41"/>
        <end position="61"/>
    </location>
</feature>
<organism>
    <name type="scientific">Synechococcus elongatus (strain ATCC 33912 / PCC 7942 / FACHB-805)</name>
    <name type="common">Anacystis nidulans R2</name>
    <dbReference type="NCBI Taxonomy" id="1140"/>
    <lineage>
        <taxon>Bacteria</taxon>
        <taxon>Bacillati</taxon>
        <taxon>Cyanobacteriota</taxon>
        <taxon>Cyanophyceae</taxon>
        <taxon>Synechococcales</taxon>
        <taxon>Synechococcaceae</taxon>
        <taxon>Synechococcus</taxon>
    </lineage>
</organism>
<keyword id="KW-0472">Membrane</keyword>
<keyword id="KW-0602">Photosynthesis</keyword>
<keyword id="KW-0604">Photosystem II</keyword>
<keyword id="KW-0674">Reaction center</keyword>
<keyword id="KW-1185">Reference proteome</keyword>
<keyword id="KW-0793">Thylakoid</keyword>
<keyword id="KW-0812">Transmembrane</keyword>
<keyword id="KW-1133">Transmembrane helix</keyword>
<name>PSBZ_SYNE7</name>
<accession>Q31KZ4</accession>
<comment type="function">
    <text evidence="1">May control the interaction of photosystem II (PSII) cores with the light-harvesting antenna, regulates electron flow through the 2 photosystem reaction centers. PSII is a light-driven water plastoquinone oxidoreductase, using light energy to abstract electrons from H(2)O, generating a proton gradient subsequently used for ATP formation.</text>
</comment>
<comment type="subunit">
    <text evidence="1">PSII is composed of 1 copy each of membrane proteins PsbA, PsbB, PsbC, PsbD, PsbE, PsbF, PsbH, PsbI, PsbJ, PsbK, PsbL, PsbM, PsbT, PsbX, PsbY, PsbZ, Psb30/Ycf12, peripheral proteins PsbO, CyanoQ (PsbQ), PsbU, PsbV and a large number of cofactors. It forms dimeric complexes.</text>
</comment>
<comment type="subcellular location">
    <subcellularLocation>
        <location evidence="1">Cellular thylakoid membrane</location>
        <topology evidence="1">Multi-pass membrane protein</topology>
    </subcellularLocation>
</comment>
<comment type="similarity">
    <text evidence="1">Belongs to the PsbZ family.</text>
</comment>
<sequence length="62" mass="6714">MVILFQLALLLLVVMSFVLIVGVPVLYATNGDRVQSNRLILVGGLAWTALVVLVGVLNYFVV</sequence>
<gene>
    <name evidence="1" type="primary">psbZ</name>
    <name type="ordered locus">Synpcc7942_2245</name>
</gene>
<protein>
    <recommendedName>
        <fullName evidence="1">Photosystem II reaction center protein Z</fullName>
        <shortName evidence="1">PSII-Z</shortName>
    </recommendedName>
</protein>
<proteinExistence type="inferred from homology"/>
<dbReference type="EMBL" id="CP000100">
    <property type="protein sequence ID" value="ABB58275.1"/>
    <property type="molecule type" value="Genomic_DNA"/>
</dbReference>
<dbReference type="RefSeq" id="WP_011244163.1">
    <property type="nucleotide sequence ID" value="NZ_JACJTX010000001.1"/>
</dbReference>
<dbReference type="SMR" id="Q31KZ4"/>
<dbReference type="STRING" id="1140.Synpcc7942_2245"/>
<dbReference type="PaxDb" id="1140-Synpcc7942_2245"/>
<dbReference type="GeneID" id="72431127"/>
<dbReference type="KEGG" id="syf:Synpcc7942_2245"/>
<dbReference type="eggNOG" id="ENOG5032ZB0">
    <property type="taxonomic scope" value="Bacteria"/>
</dbReference>
<dbReference type="HOGENOM" id="CLU_195286_1_1_3"/>
<dbReference type="BioCyc" id="SYNEL:SYNPCC7942_2245-MONOMER"/>
<dbReference type="Proteomes" id="UP000889800">
    <property type="component" value="Chromosome"/>
</dbReference>
<dbReference type="GO" id="GO:0009539">
    <property type="term" value="C:photosystem II reaction center"/>
    <property type="evidence" value="ECO:0007669"/>
    <property type="project" value="InterPro"/>
</dbReference>
<dbReference type="GO" id="GO:0031676">
    <property type="term" value="C:plasma membrane-derived thylakoid membrane"/>
    <property type="evidence" value="ECO:0007669"/>
    <property type="project" value="UniProtKB-SubCell"/>
</dbReference>
<dbReference type="GO" id="GO:0015979">
    <property type="term" value="P:photosynthesis"/>
    <property type="evidence" value="ECO:0007669"/>
    <property type="project" value="UniProtKB-UniRule"/>
</dbReference>
<dbReference type="GO" id="GO:0042549">
    <property type="term" value="P:photosystem II stabilization"/>
    <property type="evidence" value="ECO:0007669"/>
    <property type="project" value="InterPro"/>
</dbReference>
<dbReference type="Gene3D" id="1.10.287.740">
    <property type="entry name" value="Photosystem II PsbZ, reaction centre"/>
    <property type="match status" value="1"/>
</dbReference>
<dbReference type="HAMAP" id="MF_00644">
    <property type="entry name" value="PSII_PsbZ"/>
    <property type="match status" value="1"/>
</dbReference>
<dbReference type="InterPro" id="IPR002644">
    <property type="entry name" value="PSII_PsbZ"/>
</dbReference>
<dbReference type="InterPro" id="IPR036512">
    <property type="entry name" value="PSII_PsbZ_sf"/>
</dbReference>
<dbReference type="NCBIfam" id="TIGR03043">
    <property type="entry name" value="PS_II_psbZ"/>
    <property type="match status" value="1"/>
</dbReference>
<dbReference type="Pfam" id="PF01737">
    <property type="entry name" value="Ycf9"/>
    <property type="match status" value="1"/>
</dbReference>
<dbReference type="SUPFAM" id="SSF161055">
    <property type="entry name" value="PsbZ-like"/>
    <property type="match status" value="1"/>
</dbReference>